<keyword id="KW-0067">ATP-binding</keyword>
<keyword id="KW-0238">DNA-binding</keyword>
<keyword id="KW-0347">Helicase</keyword>
<keyword id="KW-0378">Hydrolase</keyword>
<keyword id="KW-0426">Late protein</keyword>
<keyword id="KW-0547">Nucleotide-binding</keyword>
<keyword id="KW-1185">Reference proteome</keyword>
<keyword id="KW-0804">Transcription</keyword>
<keyword id="KW-0946">Virion</keyword>
<reference key="1">
    <citation type="journal article" date="1999" name="Virology">
        <title>The complete DNA sequence of myxoma virus.</title>
        <authorList>
            <person name="Cameron C."/>
            <person name="Hota-Mitchell S."/>
            <person name="Chen L."/>
            <person name="Barrett J.W."/>
            <person name="Cao J.-X."/>
            <person name="Macaulay C."/>
            <person name="Willer D.O."/>
            <person name="Evans D.H."/>
            <person name="McFadden G."/>
        </authorList>
    </citation>
    <scope>NUCLEOTIDE SEQUENCE [LARGE SCALE GENOMIC DNA]</scope>
</reference>
<sequence length="478" mass="54952">MSVCSEIDYALYTELKKFLNSQPLFLFNADKNFVEVVPSSSFKFYIPIGVFSNSDVALIRPVHTTCTNHIESADATFPNLYPLQKRVVAEVTTSMRQKLSTHRPMYMTLHLSCGFGKTITACYLMVVHRRKTVICVPNKMLIHQWKAAVELTKLSYIISTDGVSVLLKQLRTKTADVLIIVSRHLSNDYFCKKIHDEYDTFILDESHMYNLMNNSALTKFLTFYPPRICYFLTATPRLANRIYCNDVVNVLKVSTLMKRLKIVEYFFEPYSTECIRQMAKHLNTENNKYHIYTEKILAEDLPRNNLIVDTVSREFKHGLVERVIVVVKLRKHMTFFYDKFVEEFGTDYVYLGDAKNKDTSAVVKSLLQKKKFIFVSTSHYSGTGLDIPSLDSLVICCAVLNSMQIEQLLGRVCRESESVKKTVFLFPNTSIREIKHSLGFFTERIVSVSTDKLGFQQEGKEGTKEEPALTKAFSSQIR</sequence>
<proteinExistence type="inferred from homology"/>
<evidence type="ECO:0000250" key="1"/>
<evidence type="ECO:0000255" key="2">
    <source>
        <dbReference type="PROSITE-ProRule" id="PRU00541"/>
    </source>
</evidence>
<evidence type="ECO:0000255" key="3">
    <source>
        <dbReference type="PROSITE-ProRule" id="PRU00542"/>
    </source>
</evidence>
<evidence type="ECO:0000256" key="4">
    <source>
        <dbReference type="SAM" id="MobiDB-lite"/>
    </source>
</evidence>
<evidence type="ECO:0000305" key="5"/>
<organismHost>
    <name type="scientific">Oryctolagus cuniculus</name>
    <name type="common">Rabbit</name>
    <dbReference type="NCBI Taxonomy" id="9986"/>
</organismHost>
<name>A18_MYXVL</name>
<comment type="function">
    <text evidence="1">DNA helicase which seems to act as a postreplicative transcription termination factor. Involved in ATP-dependent release of nascent RNA. Forms a stable complex with single-stranded DNA, and to a lesser extent RNA (By similarity).</text>
</comment>
<comment type="subunit">
    <text evidence="1">Interacts with G2. Might be part of a transcription complex composed at least of G2, A18, and H5.</text>
</comment>
<comment type="subcellular location">
    <subcellularLocation>
        <location evidence="1">Virion</location>
    </subcellularLocation>
    <text evidence="1">Localizes to the virion core.</text>
</comment>
<comment type="similarity">
    <text evidence="5">Belongs to the helicase family. Poxviruses subfamily.</text>
</comment>
<dbReference type="EC" id="3.6.4.-"/>
<dbReference type="EMBL" id="AF170726">
    <property type="protein sequence ID" value="AAF14996.1"/>
    <property type="molecule type" value="Genomic_DNA"/>
</dbReference>
<dbReference type="RefSeq" id="NP_051822.1">
    <property type="nucleotide sequence ID" value="NC_001132.2"/>
</dbReference>
<dbReference type="GeneID" id="932054"/>
<dbReference type="KEGG" id="vg:932054"/>
<dbReference type="Proteomes" id="UP000000867">
    <property type="component" value="Segment"/>
</dbReference>
<dbReference type="GO" id="GO:0044423">
    <property type="term" value="C:virion component"/>
    <property type="evidence" value="ECO:0007669"/>
    <property type="project" value="UniProtKB-KW"/>
</dbReference>
<dbReference type="GO" id="GO:0005524">
    <property type="term" value="F:ATP binding"/>
    <property type="evidence" value="ECO:0007669"/>
    <property type="project" value="UniProtKB-KW"/>
</dbReference>
<dbReference type="GO" id="GO:0003677">
    <property type="term" value="F:DNA binding"/>
    <property type="evidence" value="ECO:0007669"/>
    <property type="project" value="UniProtKB-KW"/>
</dbReference>
<dbReference type="GO" id="GO:0004386">
    <property type="term" value="F:helicase activity"/>
    <property type="evidence" value="ECO:0007669"/>
    <property type="project" value="UniProtKB-KW"/>
</dbReference>
<dbReference type="GO" id="GO:0016787">
    <property type="term" value="F:hydrolase activity"/>
    <property type="evidence" value="ECO:0007669"/>
    <property type="project" value="UniProtKB-KW"/>
</dbReference>
<dbReference type="CDD" id="cd18785">
    <property type="entry name" value="SF2_C"/>
    <property type="match status" value="1"/>
</dbReference>
<dbReference type="Gene3D" id="3.40.50.300">
    <property type="entry name" value="P-loop containing nucleotide triphosphate hydrolases"/>
    <property type="match status" value="2"/>
</dbReference>
<dbReference type="InterPro" id="IPR006935">
    <property type="entry name" value="Helicase/UvrB_N"/>
</dbReference>
<dbReference type="InterPro" id="IPR014001">
    <property type="entry name" value="Helicase_ATP-bd"/>
</dbReference>
<dbReference type="InterPro" id="IPR001650">
    <property type="entry name" value="Helicase_C-like"/>
</dbReference>
<dbReference type="InterPro" id="IPR027417">
    <property type="entry name" value="P-loop_NTPase"/>
</dbReference>
<dbReference type="Pfam" id="PF00271">
    <property type="entry name" value="Helicase_C"/>
    <property type="match status" value="1"/>
</dbReference>
<dbReference type="Pfam" id="PF04851">
    <property type="entry name" value="ResIII"/>
    <property type="match status" value="1"/>
</dbReference>
<dbReference type="SMART" id="SM00487">
    <property type="entry name" value="DEXDc"/>
    <property type="match status" value="1"/>
</dbReference>
<dbReference type="SUPFAM" id="SSF52540">
    <property type="entry name" value="P-loop containing nucleoside triphosphate hydrolases"/>
    <property type="match status" value="1"/>
</dbReference>
<dbReference type="PROSITE" id="PS51192">
    <property type="entry name" value="HELICASE_ATP_BIND_1"/>
    <property type="match status" value="1"/>
</dbReference>
<dbReference type="PROSITE" id="PS51194">
    <property type="entry name" value="HELICASE_CTER"/>
    <property type="match status" value="1"/>
</dbReference>
<organism>
    <name type="scientific">Myxoma virus (strain Lausanne)</name>
    <name type="common">MYXV</name>
    <dbReference type="NCBI Taxonomy" id="31530"/>
    <lineage>
        <taxon>Viruses</taxon>
        <taxon>Varidnaviria</taxon>
        <taxon>Bamfordvirae</taxon>
        <taxon>Nucleocytoviricota</taxon>
        <taxon>Pokkesviricetes</taxon>
        <taxon>Chitovirales</taxon>
        <taxon>Poxviridae</taxon>
        <taxon>Chordopoxvirinae</taxon>
        <taxon>Leporipoxvirus</taxon>
        <taxon>Myxoma virus</taxon>
    </lineage>
</organism>
<protein>
    <recommendedName>
        <fullName>Transcript termination protein A18</fullName>
        <ecNumber>3.6.4.-</ecNumber>
    </recommendedName>
</protein>
<accession>Q9Q8J2</accession>
<gene>
    <name type="ordered locus">m108R</name>
</gene>
<feature type="chain" id="PRO_0000102186" description="Transcript termination protein A18">
    <location>
        <begin position="1"/>
        <end position="478"/>
    </location>
</feature>
<feature type="domain" description="Helicase ATP-binding" evidence="2">
    <location>
        <begin position="98"/>
        <end position="254"/>
    </location>
</feature>
<feature type="domain" description="Helicase C-terminal" evidence="3">
    <location>
        <begin position="302"/>
        <end position="454"/>
    </location>
</feature>
<feature type="region of interest" description="Disordered" evidence="4">
    <location>
        <begin position="456"/>
        <end position="478"/>
    </location>
</feature>
<feature type="short sequence motif" description="DESH box">
    <location>
        <begin position="204"/>
        <end position="207"/>
    </location>
</feature>
<feature type="compositionally biased region" description="Basic and acidic residues" evidence="4">
    <location>
        <begin position="458"/>
        <end position="468"/>
    </location>
</feature>
<feature type="binding site" evidence="2">
    <location>
        <begin position="111"/>
        <end position="118"/>
    </location>
    <ligand>
        <name>ATP</name>
        <dbReference type="ChEBI" id="CHEBI:30616"/>
    </ligand>
</feature>